<feature type="chain" id="PRO_0000136107" description="Histidine--tRNA ligase 2">
    <location>
        <begin position="1"/>
        <end position="423"/>
    </location>
</feature>
<gene>
    <name evidence="1" type="primary">hisS2</name>
    <name type="ordered locus">BT9727_4136</name>
</gene>
<accession>Q6HDC2</accession>
<keyword id="KW-0030">Aminoacyl-tRNA synthetase</keyword>
<keyword id="KW-0067">ATP-binding</keyword>
<keyword id="KW-0963">Cytoplasm</keyword>
<keyword id="KW-0436">Ligase</keyword>
<keyword id="KW-0547">Nucleotide-binding</keyword>
<keyword id="KW-0648">Protein biosynthesis</keyword>
<sequence length="423" mass="47747">MSIQIPRGTQDILPGTVELWQYIEGQAREICRRYNYKEIRTPIFEHTELFLRGVGDTTDIVQKEMYSFQDRGERSLTLRPEGTAPVVRSYVENKMFGDATQPTKLYYIGQMFRYERPQAGRYRQFVQFGIEAIGSNDPAIDAEVIALAVEFYRGMGLKNIKVVLNSLGDAASRQAHRDALIAHFEPRIGEFCSDCQSRLEKNPLRILDCKKDRNHELMGTAPSITEYLNEDSAVYYDKVQELLTMMDVPFEKDPNLVRGLDYYQHTVFEIMSEAEGFGAITTLSGGGRYNGLVQEIGGPEMPGIGFAMSIERLIMALKAENIELPIEHSIDCYVVALGEKAKDHAAKVAFDLRKAGLAVEKDYLDRKMKAQFKSADRLKAKFVAVLGEDELDKGIINLKDMATGEQEEVALDVFASYVAEKLI</sequence>
<reference key="1">
    <citation type="journal article" date="2006" name="J. Bacteriol.">
        <title>Pathogenomic sequence analysis of Bacillus cereus and Bacillus thuringiensis isolates closely related to Bacillus anthracis.</title>
        <authorList>
            <person name="Han C.S."/>
            <person name="Xie G."/>
            <person name="Challacombe J.F."/>
            <person name="Altherr M.R."/>
            <person name="Bhotika S.S."/>
            <person name="Bruce D."/>
            <person name="Campbell C.S."/>
            <person name="Campbell M.L."/>
            <person name="Chen J."/>
            <person name="Chertkov O."/>
            <person name="Cleland C."/>
            <person name="Dimitrijevic M."/>
            <person name="Doggett N.A."/>
            <person name="Fawcett J.J."/>
            <person name="Glavina T."/>
            <person name="Goodwin L.A."/>
            <person name="Hill K.K."/>
            <person name="Hitchcock P."/>
            <person name="Jackson P.J."/>
            <person name="Keim P."/>
            <person name="Kewalramani A.R."/>
            <person name="Longmire J."/>
            <person name="Lucas S."/>
            <person name="Malfatti S."/>
            <person name="McMurry K."/>
            <person name="Meincke L.J."/>
            <person name="Misra M."/>
            <person name="Moseman B.L."/>
            <person name="Mundt M."/>
            <person name="Munk A.C."/>
            <person name="Okinaka R.T."/>
            <person name="Parson-Quintana B."/>
            <person name="Reilly L.P."/>
            <person name="Richardson P."/>
            <person name="Robinson D.L."/>
            <person name="Rubin E."/>
            <person name="Saunders E."/>
            <person name="Tapia R."/>
            <person name="Tesmer J.G."/>
            <person name="Thayer N."/>
            <person name="Thompson L.S."/>
            <person name="Tice H."/>
            <person name="Ticknor L.O."/>
            <person name="Wills P.L."/>
            <person name="Brettin T.S."/>
            <person name="Gilna P."/>
        </authorList>
    </citation>
    <scope>NUCLEOTIDE SEQUENCE [LARGE SCALE GENOMIC DNA]</scope>
    <source>
        <strain>97-27</strain>
    </source>
</reference>
<comment type="catalytic activity">
    <reaction evidence="1">
        <text>tRNA(His) + L-histidine + ATP = L-histidyl-tRNA(His) + AMP + diphosphate + H(+)</text>
        <dbReference type="Rhea" id="RHEA:17313"/>
        <dbReference type="Rhea" id="RHEA-COMP:9665"/>
        <dbReference type="Rhea" id="RHEA-COMP:9689"/>
        <dbReference type="ChEBI" id="CHEBI:15378"/>
        <dbReference type="ChEBI" id="CHEBI:30616"/>
        <dbReference type="ChEBI" id="CHEBI:33019"/>
        <dbReference type="ChEBI" id="CHEBI:57595"/>
        <dbReference type="ChEBI" id="CHEBI:78442"/>
        <dbReference type="ChEBI" id="CHEBI:78527"/>
        <dbReference type="ChEBI" id="CHEBI:456215"/>
        <dbReference type="EC" id="6.1.1.21"/>
    </reaction>
</comment>
<comment type="subunit">
    <text evidence="1">Homodimer.</text>
</comment>
<comment type="subcellular location">
    <subcellularLocation>
        <location evidence="1">Cytoplasm</location>
    </subcellularLocation>
</comment>
<comment type="similarity">
    <text evidence="1">Belongs to the class-II aminoacyl-tRNA synthetase family.</text>
</comment>
<proteinExistence type="inferred from homology"/>
<dbReference type="EC" id="6.1.1.21" evidence="1"/>
<dbReference type="EMBL" id="AE017355">
    <property type="protein sequence ID" value="AAT63688.1"/>
    <property type="molecule type" value="Genomic_DNA"/>
</dbReference>
<dbReference type="RefSeq" id="YP_038454.1">
    <property type="nucleotide sequence ID" value="NC_005957.1"/>
</dbReference>
<dbReference type="SMR" id="Q6HDC2"/>
<dbReference type="KEGG" id="btk:BT9727_4136"/>
<dbReference type="PATRIC" id="fig|281309.8.peg.4414"/>
<dbReference type="HOGENOM" id="CLU_025113_1_1_9"/>
<dbReference type="Proteomes" id="UP000001301">
    <property type="component" value="Chromosome"/>
</dbReference>
<dbReference type="GO" id="GO:0005737">
    <property type="term" value="C:cytoplasm"/>
    <property type="evidence" value="ECO:0007669"/>
    <property type="project" value="UniProtKB-SubCell"/>
</dbReference>
<dbReference type="GO" id="GO:0005524">
    <property type="term" value="F:ATP binding"/>
    <property type="evidence" value="ECO:0007669"/>
    <property type="project" value="UniProtKB-UniRule"/>
</dbReference>
<dbReference type="GO" id="GO:0140096">
    <property type="term" value="F:catalytic activity, acting on a protein"/>
    <property type="evidence" value="ECO:0007669"/>
    <property type="project" value="UniProtKB-ARBA"/>
</dbReference>
<dbReference type="GO" id="GO:0004821">
    <property type="term" value="F:histidine-tRNA ligase activity"/>
    <property type="evidence" value="ECO:0007669"/>
    <property type="project" value="UniProtKB-UniRule"/>
</dbReference>
<dbReference type="GO" id="GO:0016740">
    <property type="term" value="F:transferase activity"/>
    <property type="evidence" value="ECO:0007669"/>
    <property type="project" value="UniProtKB-ARBA"/>
</dbReference>
<dbReference type="GO" id="GO:0006427">
    <property type="term" value="P:histidyl-tRNA aminoacylation"/>
    <property type="evidence" value="ECO:0007669"/>
    <property type="project" value="UniProtKB-UniRule"/>
</dbReference>
<dbReference type="CDD" id="cd00773">
    <property type="entry name" value="HisRS-like_core"/>
    <property type="match status" value="1"/>
</dbReference>
<dbReference type="CDD" id="cd00859">
    <property type="entry name" value="HisRS_anticodon"/>
    <property type="match status" value="1"/>
</dbReference>
<dbReference type="FunFam" id="3.30.930.10:FF:000005">
    <property type="entry name" value="Histidine--tRNA ligase"/>
    <property type="match status" value="1"/>
</dbReference>
<dbReference type="FunFam" id="3.40.50.800:FF:000013">
    <property type="entry name" value="Histidine--tRNA ligase"/>
    <property type="match status" value="1"/>
</dbReference>
<dbReference type="Gene3D" id="3.40.50.800">
    <property type="entry name" value="Anticodon-binding domain"/>
    <property type="match status" value="1"/>
</dbReference>
<dbReference type="Gene3D" id="3.30.930.10">
    <property type="entry name" value="Bira Bifunctional Protein, Domain 2"/>
    <property type="match status" value="1"/>
</dbReference>
<dbReference type="HAMAP" id="MF_00127">
    <property type="entry name" value="His_tRNA_synth"/>
    <property type="match status" value="1"/>
</dbReference>
<dbReference type="InterPro" id="IPR006195">
    <property type="entry name" value="aa-tRNA-synth_II"/>
</dbReference>
<dbReference type="InterPro" id="IPR045864">
    <property type="entry name" value="aa-tRNA-synth_II/BPL/LPL"/>
</dbReference>
<dbReference type="InterPro" id="IPR004154">
    <property type="entry name" value="Anticodon-bd"/>
</dbReference>
<dbReference type="InterPro" id="IPR036621">
    <property type="entry name" value="Anticodon-bd_dom_sf"/>
</dbReference>
<dbReference type="InterPro" id="IPR015807">
    <property type="entry name" value="His-tRNA-ligase"/>
</dbReference>
<dbReference type="InterPro" id="IPR041715">
    <property type="entry name" value="HisRS-like_core"/>
</dbReference>
<dbReference type="InterPro" id="IPR004516">
    <property type="entry name" value="HisRS/HisZ"/>
</dbReference>
<dbReference type="InterPro" id="IPR033656">
    <property type="entry name" value="HisRS_anticodon"/>
</dbReference>
<dbReference type="NCBIfam" id="TIGR00442">
    <property type="entry name" value="hisS"/>
    <property type="match status" value="1"/>
</dbReference>
<dbReference type="PANTHER" id="PTHR43707:SF1">
    <property type="entry name" value="HISTIDINE--TRNA LIGASE, MITOCHONDRIAL-RELATED"/>
    <property type="match status" value="1"/>
</dbReference>
<dbReference type="PANTHER" id="PTHR43707">
    <property type="entry name" value="HISTIDYL-TRNA SYNTHETASE"/>
    <property type="match status" value="1"/>
</dbReference>
<dbReference type="Pfam" id="PF03129">
    <property type="entry name" value="HGTP_anticodon"/>
    <property type="match status" value="1"/>
</dbReference>
<dbReference type="Pfam" id="PF13393">
    <property type="entry name" value="tRNA-synt_His"/>
    <property type="match status" value="1"/>
</dbReference>
<dbReference type="PIRSF" id="PIRSF001549">
    <property type="entry name" value="His-tRNA_synth"/>
    <property type="match status" value="1"/>
</dbReference>
<dbReference type="SUPFAM" id="SSF52954">
    <property type="entry name" value="Class II aaRS ABD-related"/>
    <property type="match status" value="1"/>
</dbReference>
<dbReference type="SUPFAM" id="SSF55681">
    <property type="entry name" value="Class II aaRS and biotin synthetases"/>
    <property type="match status" value="1"/>
</dbReference>
<dbReference type="PROSITE" id="PS50862">
    <property type="entry name" value="AA_TRNA_LIGASE_II"/>
    <property type="match status" value="1"/>
</dbReference>
<protein>
    <recommendedName>
        <fullName evidence="1">Histidine--tRNA ligase 2</fullName>
        <ecNumber evidence="1">6.1.1.21</ecNumber>
    </recommendedName>
    <alternativeName>
        <fullName evidence="1">Histidyl-tRNA synthetase 2</fullName>
        <shortName evidence="1">HisRS 2</shortName>
    </alternativeName>
</protein>
<name>SYH2_BACHK</name>
<evidence type="ECO:0000255" key="1">
    <source>
        <dbReference type="HAMAP-Rule" id="MF_00127"/>
    </source>
</evidence>
<organism>
    <name type="scientific">Bacillus thuringiensis subsp. konkukian (strain 97-27)</name>
    <dbReference type="NCBI Taxonomy" id="281309"/>
    <lineage>
        <taxon>Bacteria</taxon>
        <taxon>Bacillati</taxon>
        <taxon>Bacillota</taxon>
        <taxon>Bacilli</taxon>
        <taxon>Bacillales</taxon>
        <taxon>Bacillaceae</taxon>
        <taxon>Bacillus</taxon>
        <taxon>Bacillus cereus group</taxon>
    </lineage>
</organism>